<gene>
    <name evidence="1" type="primary">guaC</name>
    <name type="ordered locus">Spy49_0885</name>
</gene>
<dbReference type="EC" id="1.7.1.7" evidence="1"/>
<dbReference type="EMBL" id="CP000829">
    <property type="protein sequence ID" value="ACI61193.1"/>
    <property type="molecule type" value="Genomic_DNA"/>
</dbReference>
<dbReference type="SMR" id="B5XLI1"/>
<dbReference type="KEGG" id="soz:Spy49_0885"/>
<dbReference type="HOGENOM" id="CLU_022552_5_0_9"/>
<dbReference type="Proteomes" id="UP000001039">
    <property type="component" value="Chromosome"/>
</dbReference>
<dbReference type="GO" id="GO:0005829">
    <property type="term" value="C:cytosol"/>
    <property type="evidence" value="ECO:0007669"/>
    <property type="project" value="TreeGrafter"/>
</dbReference>
<dbReference type="GO" id="GO:1902560">
    <property type="term" value="C:GMP reductase complex"/>
    <property type="evidence" value="ECO:0007669"/>
    <property type="project" value="InterPro"/>
</dbReference>
<dbReference type="GO" id="GO:0003920">
    <property type="term" value="F:GMP reductase activity"/>
    <property type="evidence" value="ECO:0007669"/>
    <property type="project" value="UniProtKB-UniRule"/>
</dbReference>
<dbReference type="GO" id="GO:0006163">
    <property type="term" value="P:purine nucleotide metabolic process"/>
    <property type="evidence" value="ECO:0007669"/>
    <property type="project" value="UniProtKB-UniRule"/>
</dbReference>
<dbReference type="CDD" id="cd00381">
    <property type="entry name" value="IMPDH"/>
    <property type="match status" value="1"/>
</dbReference>
<dbReference type="FunFam" id="3.20.20.70:FF:000424">
    <property type="entry name" value="Inosine-5'-monophosphate dehydrogenase 2"/>
    <property type="match status" value="1"/>
</dbReference>
<dbReference type="Gene3D" id="3.20.20.70">
    <property type="entry name" value="Aldolase class I"/>
    <property type="match status" value="1"/>
</dbReference>
<dbReference type="HAMAP" id="MF_01511">
    <property type="entry name" value="GMP_reduct_type2"/>
    <property type="match status" value="1"/>
</dbReference>
<dbReference type="InterPro" id="IPR013785">
    <property type="entry name" value="Aldolase_TIM"/>
</dbReference>
<dbReference type="InterPro" id="IPR050139">
    <property type="entry name" value="GMP_reductase"/>
</dbReference>
<dbReference type="InterPro" id="IPR005994">
    <property type="entry name" value="GuaC_type_2"/>
</dbReference>
<dbReference type="InterPro" id="IPR015875">
    <property type="entry name" value="IMP_DH/GMP_Rdtase_CS"/>
</dbReference>
<dbReference type="InterPro" id="IPR001093">
    <property type="entry name" value="IMP_DH_GMPRt"/>
</dbReference>
<dbReference type="NCBIfam" id="TIGR01306">
    <property type="entry name" value="GMP_reduct_2"/>
    <property type="match status" value="1"/>
</dbReference>
<dbReference type="NCBIfam" id="NF003966">
    <property type="entry name" value="PRK05458.1"/>
    <property type="match status" value="1"/>
</dbReference>
<dbReference type="PANTHER" id="PTHR43170">
    <property type="entry name" value="GMP REDUCTASE"/>
    <property type="match status" value="1"/>
</dbReference>
<dbReference type="PANTHER" id="PTHR43170:SF5">
    <property type="entry name" value="GMP REDUCTASE"/>
    <property type="match status" value="1"/>
</dbReference>
<dbReference type="Pfam" id="PF00478">
    <property type="entry name" value="IMPDH"/>
    <property type="match status" value="1"/>
</dbReference>
<dbReference type="PIRSF" id="PIRSF036500">
    <property type="entry name" value="GMP_red_Firmic"/>
    <property type="match status" value="1"/>
</dbReference>
<dbReference type="SMART" id="SM01240">
    <property type="entry name" value="IMPDH"/>
    <property type="match status" value="1"/>
</dbReference>
<dbReference type="SUPFAM" id="SSF51412">
    <property type="entry name" value="Inosine monophosphate dehydrogenase (IMPDH)"/>
    <property type="match status" value="1"/>
</dbReference>
<dbReference type="PROSITE" id="PS00487">
    <property type="entry name" value="IMP_DH_GMP_RED"/>
    <property type="match status" value="1"/>
</dbReference>
<evidence type="ECO:0000255" key="1">
    <source>
        <dbReference type="HAMAP-Rule" id="MF_01511"/>
    </source>
</evidence>
<sequence length="327" mass="35915">MFNDIPVFDYEDIQLIPNKCIITSRSQADTSVTLGKYQFKLPVIPANMQTIIDETIAEQLAKEGYFYIMHRFDEDSRKPFIKRMHEQGLIASISVGVKACEYDFVTSLKEDAPEFITIDIAHGHANSVIDMIKHIKTELPETFVIAGNVGTPEAVRELENAGADATKVGIGPGKVCITKVKTGFGTGGWQLAALRWCAKAARKPIIADGGIRTHGDIAKSIRFGASMVMIGSLFAGHIESPGKTVEVDGETFKEYYGSASEYQKGEHKNVEGKKILLPTKGHLSDTLTEMQQDLQSSISYAGGKDLDSLRHVDYVIVKNSIWNGDSI</sequence>
<proteinExistence type="inferred from homology"/>
<name>GUAC_STRPZ</name>
<organism>
    <name type="scientific">Streptococcus pyogenes serotype M49 (strain NZ131)</name>
    <dbReference type="NCBI Taxonomy" id="471876"/>
    <lineage>
        <taxon>Bacteria</taxon>
        <taxon>Bacillati</taxon>
        <taxon>Bacillota</taxon>
        <taxon>Bacilli</taxon>
        <taxon>Lactobacillales</taxon>
        <taxon>Streptococcaceae</taxon>
        <taxon>Streptococcus</taxon>
    </lineage>
</organism>
<accession>B5XLI1</accession>
<protein>
    <recommendedName>
        <fullName evidence="1">GMP reductase</fullName>
        <ecNumber evidence="1">1.7.1.7</ecNumber>
    </recommendedName>
    <alternativeName>
        <fullName evidence="1">Guanosine 5'-monophosphate oxidoreductase</fullName>
        <shortName evidence="1">Guanosine monophosphate reductase</shortName>
    </alternativeName>
</protein>
<reference key="1">
    <citation type="journal article" date="2008" name="J. Bacteriol.">
        <title>Genome sequence of a nephritogenic and highly transformable M49 strain of Streptococcus pyogenes.</title>
        <authorList>
            <person name="McShan W.M."/>
            <person name="Ferretti J.J."/>
            <person name="Karasawa T."/>
            <person name="Suvorov A.N."/>
            <person name="Lin S."/>
            <person name="Qin B."/>
            <person name="Jia H."/>
            <person name="Kenton S."/>
            <person name="Najar F."/>
            <person name="Wu H."/>
            <person name="Scott J."/>
            <person name="Roe B.A."/>
            <person name="Savic D.J."/>
        </authorList>
    </citation>
    <scope>NUCLEOTIDE SEQUENCE [LARGE SCALE GENOMIC DNA]</scope>
    <source>
        <strain>NZ131</strain>
    </source>
</reference>
<feature type="chain" id="PRO_1000146144" description="GMP reductase">
    <location>
        <begin position="1"/>
        <end position="327"/>
    </location>
</feature>
<feature type="active site" description="Thioimidate intermediate" evidence="1">
    <location>
        <position position="176"/>
    </location>
</feature>
<feature type="binding site" evidence="1">
    <location>
        <begin position="205"/>
        <end position="228"/>
    </location>
    <ligand>
        <name>NADP(+)</name>
        <dbReference type="ChEBI" id="CHEBI:58349"/>
    </ligand>
</feature>
<comment type="function">
    <text evidence="1">Catalyzes the irreversible NADPH-dependent deamination of GMP to IMP. It functions in the conversion of nucleobase, nucleoside and nucleotide derivatives of G to A nucleotides, and in maintaining the intracellular balance of A and G nucleotides.</text>
</comment>
<comment type="catalytic activity">
    <reaction evidence="1">
        <text>IMP + NH4(+) + NADP(+) = GMP + NADPH + 2 H(+)</text>
        <dbReference type="Rhea" id="RHEA:17185"/>
        <dbReference type="ChEBI" id="CHEBI:15378"/>
        <dbReference type="ChEBI" id="CHEBI:28938"/>
        <dbReference type="ChEBI" id="CHEBI:57783"/>
        <dbReference type="ChEBI" id="CHEBI:58053"/>
        <dbReference type="ChEBI" id="CHEBI:58115"/>
        <dbReference type="ChEBI" id="CHEBI:58349"/>
        <dbReference type="EC" id="1.7.1.7"/>
    </reaction>
</comment>
<comment type="similarity">
    <text evidence="1">Belongs to the IMPDH/GMPR family. GuaC type 2 subfamily.</text>
</comment>
<keyword id="KW-0521">NADP</keyword>
<keyword id="KW-0560">Oxidoreductase</keyword>